<proteinExistence type="inferred from homology"/>
<accession>A9MGX7</accession>
<keyword id="KW-0997">Cell inner membrane</keyword>
<keyword id="KW-1003">Cell membrane</keyword>
<keyword id="KW-0963">Cytoplasm</keyword>
<keyword id="KW-0342">GTP-binding</keyword>
<keyword id="KW-0472">Membrane</keyword>
<keyword id="KW-0547">Nucleotide-binding</keyword>
<keyword id="KW-1185">Reference proteome</keyword>
<keyword id="KW-0690">Ribosome biogenesis</keyword>
<keyword id="KW-0694">RNA-binding</keyword>
<keyword id="KW-0699">rRNA-binding</keyword>
<sequence>MSIEKTYCGFIAIVGRPNVGKSTLLNKLLGQKISITSRKAQTTRHRIVGIHTEGPYQAIYVDTPGLHIEEKRAINRLMNKAASSSIGDVELVIFVVEGTRWTPDDEMVLNKLRDGKAPVILAVNKVDNVQEKADLLPHLQFLASQMSFLDIVPISAETGMNVDTIASIVRKHLPEATHHFPEDYITDRSQRFMASEIIREKLMRFLGAELPYSVTVEIERFVTNERGGYDINGLILVEREGQKKMVIGNKGAKIKTIGIEARKDMQEMFEAPVHLELWVKVKSGWADDERALRSLGYVDDL</sequence>
<gene>
    <name evidence="1" type="primary">era</name>
    <name type="ordered locus">SARI_00298</name>
</gene>
<organism>
    <name type="scientific">Salmonella arizonae (strain ATCC BAA-731 / CDC346-86 / RSK2980)</name>
    <dbReference type="NCBI Taxonomy" id="41514"/>
    <lineage>
        <taxon>Bacteria</taxon>
        <taxon>Pseudomonadati</taxon>
        <taxon>Pseudomonadota</taxon>
        <taxon>Gammaproteobacteria</taxon>
        <taxon>Enterobacterales</taxon>
        <taxon>Enterobacteriaceae</taxon>
        <taxon>Salmonella</taxon>
    </lineage>
</organism>
<protein>
    <recommendedName>
        <fullName evidence="1">GTPase Era</fullName>
    </recommendedName>
</protein>
<feature type="chain" id="PRO_1000079730" description="GTPase Era">
    <location>
        <begin position="1"/>
        <end position="301"/>
    </location>
</feature>
<feature type="domain" description="Era-type G" evidence="2">
    <location>
        <begin position="7"/>
        <end position="175"/>
    </location>
</feature>
<feature type="domain" description="KH type-2" evidence="1">
    <location>
        <begin position="206"/>
        <end position="283"/>
    </location>
</feature>
<feature type="region of interest" description="G1" evidence="2">
    <location>
        <begin position="15"/>
        <end position="22"/>
    </location>
</feature>
<feature type="region of interest" description="G2" evidence="2">
    <location>
        <begin position="41"/>
        <end position="45"/>
    </location>
</feature>
<feature type="region of interest" description="G3" evidence="2">
    <location>
        <begin position="62"/>
        <end position="65"/>
    </location>
</feature>
<feature type="region of interest" description="G4" evidence="2">
    <location>
        <begin position="124"/>
        <end position="127"/>
    </location>
</feature>
<feature type="region of interest" description="G5" evidence="2">
    <location>
        <begin position="154"/>
        <end position="156"/>
    </location>
</feature>
<feature type="binding site" evidence="1">
    <location>
        <begin position="15"/>
        <end position="22"/>
    </location>
    <ligand>
        <name>GTP</name>
        <dbReference type="ChEBI" id="CHEBI:37565"/>
    </ligand>
</feature>
<feature type="binding site" evidence="1">
    <location>
        <begin position="62"/>
        <end position="66"/>
    </location>
    <ligand>
        <name>GTP</name>
        <dbReference type="ChEBI" id="CHEBI:37565"/>
    </ligand>
</feature>
<feature type="binding site" evidence="1">
    <location>
        <begin position="124"/>
        <end position="127"/>
    </location>
    <ligand>
        <name>GTP</name>
        <dbReference type="ChEBI" id="CHEBI:37565"/>
    </ligand>
</feature>
<reference key="1">
    <citation type="submission" date="2007-11" db="EMBL/GenBank/DDBJ databases">
        <authorList>
            <consortium name="The Salmonella enterica serovar Arizonae Genome Sequencing Project"/>
            <person name="McClelland M."/>
            <person name="Sanderson E.K."/>
            <person name="Porwollik S."/>
            <person name="Spieth J."/>
            <person name="Clifton W.S."/>
            <person name="Fulton R."/>
            <person name="Chunyan W."/>
            <person name="Wollam A."/>
            <person name="Shah N."/>
            <person name="Pepin K."/>
            <person name="Bhonagiri V."/>
            <person name="Nash W."/>
            <person name="Johnson M."/>
            <person name="Thiruvilangam P."/>
            <person name="Wilson R."/>
        </authorList>
    </citation>
    <scope>NUCLEOTIDE SEQUENCE [LARGE SCALE GENOMIC DNA]</scope>
    <source>
        <strain>ATCC BAA-731 / CDC346-86 / RSK2980</strain>
    </source>
</reference>
<name>ERA_SALAR</name>
<evidence type="ECO:0000255" key="1">
    <source>
        <dbReference type="HAMAP-Rule" id="MF_00367"/>
    </source>
</evidence>
<evidence type="ECO:0000255" key="2">
    <source>
        <dbReference type="PROSITE-ProRule" id="PRU01050"/>
    </source>
</evidence>
<dbReference type="EMBL" id="CP000880">
    <property type="protein sequence ID" value="ABX20238.1"/>
    <property type="molecule type" value="Genomic_DNA"/>
</dbReference>
<dbReference type="SMR" id="A9MGX7"/>
<dbReference type="STRING" id="41514.SARI_00298"/>
<dbReference type="KEGG" id="ses:SARI_00298"/>
<dbReference type="HOGENOM" id="CLU_038009_1_2_6"/>
<dbReference type="Proteomes" id="UP000002084">
    <property type="component" value="Chromosome"/>
</dbReference>
<dbReference type="GO" id="GO:0005829">
    <property type="term" value="C:cytosol"/>
    <property type="evidence" value="ECO:0007669"/>
    <property type="project" value="TreeGrafter"/>
</dbReference>
<dbReference type="GO" id="GO:0005886">
    <property type="term" value="C:plasma membrane"/>
    <property type="evidence" value="ECO:0007669"/>
    <property type="project" value="UniProtKB-SubCell"/>
</dbReference>
<dbReference type="GO" id="GO:0005525">
    <property type="term" value="F:GTP binding"/>
    <property type="evidence" value="ECO:0007669"/>
    <property type="project" value="UniProtKB-UniRule"/>
</dbReference>
<dbReference type="GO" id="GO:0003924">
    <property type="term" value="F:GTPase activity"/>
    <property type="evidence" value="ECO:0007669"/>
    <property type="project" value="UniProtKB-UniRule"/>
</dbReference>
<dbReference type="GO" id="GO:0043024">
    <property type="term" value="F:ribosomal small subunit binding"/>
    <property type="evidence" value="ECO:0007669"/>
    <property type="project" value="TreeGrafter"/>
</dbReference>
<dbReference type="GO" id="GO:0070181">
    <property type="term" value="F:small ribosomal subunit rRNA binding"/>
    <property type="evidence" value="ECO:0007669"/>
    <property type="project" value="UniProtKB-UniRule"/>
</dbReference>
<dbReference type="GO" id="GO:0000028">
    <property type="term" value="P:ribosomal small subunit assembly"/>
    <property type="evidence" value="ECO:0007669"/>
    <property type="project" value="TreeGrafter"/>
</dbReference>
<dbReference type="CDD" id="cd04163">
    <property type="entry name" value="Era"/>
    <property type="match status" value="1"/>
</dbReference>
<dbReference type="CDD" id="cd22534">
    <property type="entry name" value="KH-II_Era"/>
    <property type="match status" value="1"/>
</dbReference>
<dbReference type="FunFam" id="3.30.300.20:FF:000003">
    <property type="entry name" value="GTPase Era"/>
    <property type="match status" value="1"/>
</dbReference>
<dbReference type="FunFam" id="3.40.50.300:FF:000094">
    <property type="entry name" value="GTPase Era"/>
    <property type="match status" value="1"/>
</dbReference>
<dbReference type="Gene3D" id="3.30.300.20">
    <property type="match status" value="1"/>
</dbReference>
<dbReference type="Gene3D" id="3.40.50.300">
    <property type="entry name" value="P-loop containing nucleotide triphosphate hydrolases"/>
    <property type="match status" value="1"/>
</dbReference>
<dbReference type="HAMAP" id="MF_00367">
    <property type="entry name" value="GTPase_Era"/>
    <property type="match status" value="1"/>
</dbReference>
<dbReference type="InterPro" id="IPR030388">
    <property type="entry name" value="G_ERA_dom"/>
</dbReference>
<dbReference type="InterPro" id="IPR006073">
    <property type="entry name" value="GTP-bd"/>
</dbReference>
<dbReference type="InterPro" id="IPR005662">
    <property type="entry name" value="GTPase_Era-like"/>
</dbReference>
<dbReference type="InterPro" id="IPR015946">
    <property type="entry name" value="KH_dom-like_a/b"/>
</dbReference>
<dbReference type="InterPro" id="IPR004044">
    <property type="entry name" value="KH_dom_type_2"/>
</dbReference>
<dbReference type="InterPro" id="IPR009019">
    <property type="entry name" value="KH_sf_prok-type"/>
</dbReference>
<dbReference type="InterPro" id="IPR027417">
    <property type="entry name" value="P-loop_NTPase"/>
</dbReference>
<dbReference type="InterPro" id="IPR005225">
    <property type="entry name" value="Small_GTP-bd"/>
</dbReference>
<dbReference type="NCBIfam" id="TIGR00436">
    <property type="entry name" value="era"/>
    <property type="match status" value="1"/>
</dbReference>
<dbReference type="NCBIfam" id="NF000908">
    <property type="entry name" value="PRK00089.1"/>
    <property type="match status" value="1"/>
</dbReference>
<dbReference type="NCBIfam" id="TIGR00231">
    <property type="entry name" value="small_GTP"/>
    <property type="match status" value="1"/>
</dbReference>
<dbReference type="PANTHER" id="PTHR42698">
    <property type="entry name" value="GTPASE ERA"/>
    <property type="match status" value="1"/>
</dbReference>
<dbReference type="PANTHER" id="PTHR42698:SF1">
    <property type="entry name" value="GTPASE ERA, MITOCHONDRIAL"/>
    <property type="match status" value="1"/>
</dbReference>
<dbReference type="Pfam" id="PF07650">
    <property type="entry name" value="KH_2"/>
    <property type="match status" value="1"/>
</dbReference>
<dbReference type="Pfam" id="PF01926">
    <property type="entry name" value="MMR_HSR1"/>
    <property type="match status" value="1"/>
</dbReference>
<dbReference type="SUPFAM" id="SSF52540">
    <property type="entry name" value="P-loop containing nucleoside triphosphate hydrolases"/>
    <property type="match status" value="1"/>
</dbReference>
<dbReference type="SUPFAM" id="SSF54814">
    <property type="entry name" value="Prokaryotic type KH domain (KH-domain type II)"/>
    <property type="match status" value="1"/>
</dbReference>
<dbReference type="PROSITE" id="PS51713">
    <property type="entry name" value="G_ERA"/>
    <property type="match status" value="1"/>
</dbReference>
<dbReference type="PROSITE" id="PS50823">
    <property type="entry name" value="KH_TYPE_2"/>
    <property type="match status" value="1"/>
</dbReference>
<comment type="function">
    <text evidence="1">An essential GTPase that binds both GDP and GTP, with rapid nucleotide exchange. Plays a role in 16S rRNA processing and 30S ribosomal subunit biogenesis and possibly also in cell cycle regulation and energy metabolism.</text>
</comment>
<comment type="subunit">
    <text evidence="1">Monomer.</text>
</comment>
<comment type="subcellular location">
    <subcellularLocation>
        <location>Cytoplasm</location>
    </subcellularLocation>
    <subcellularLocation>
        <location evidence="1">Cell inner membrane</location>
        <topology evidence="1">Peripheral membrane protein</topology>
    </subcellularLocation>
</comment>
<comment type="similarity">
    <text evidence="1 2">Belongs to the TRAFAC class TrmE-Era-EngA-EngB-Septin-like GTPase superfamily. Era GTPase family.</text>
</comment>